<gene>
    <name type="primary">CTT-6</name>
</gene>
<name>GLB6_CHITH</name>
<keyword id="KW-0903">Direct protein sequencing</keyword>
<keyword id="KW-0349">Heme</keyword>
<keyword id="KW-0408">Iron</keyword>
<keyword id="KW-0479">Metal-binding</keyword>
<keyword id="KW-0561">Oxygen transport</keyword>
<keyword id="KW-0732">Signal</keyword>
<keyword id="KW-0813">Transport</keyword>
<feature type="signal peptide" evidence="2">
    <location>
        <begin position="1"/>
        <end position="15"/>
    </location>
</feature>
<feature type="chain" id="PRO_0000011192" description="Globin CTT-VI">
    <location>
        <begin position="16"/>
        <end position="162"/>
    </location>
</feature>
<feature type="domain" description="Globin" evidence="1">
    <location>
        <begin position="17"/>
        <end position="161"/>
    </location>
</feature>
<feature type="binding site" description="distal binding residue" evidence="1">
    <location>
        <position position="75"/>
    </location>
    <ligand>
        <name>heme b</name>
        <dbReference type="ChEBI" id="CHEBI:60344"/>
    </ligand>
    <ligandPart>
        <name>Fe</name>
        <dbReference type="ChEBI" id="CHEBI:18248"/>
    </ligandPart>
</feature>
<feature type="binding site" description="proximal binding residue" evidence="1">
    <location>
        <position position="110"/>
    </location>
    <ligand>
        <name>heme b</name>
        <dbReference type="ChEBI" id="CHEBI:60344"/>
    </ligand>
    <ligandPart>
        <name>Fe</name>
        <dbReference type="ChEBI" id="CHEBI:18248"/>
    </ligandPart>
</feature>
<reference key="1">
    <citation type="journal article" date="1995" name="Gene">
        <title>Sequences of globin 6 gene alleles and linkage of globin 6 and 7B genes in the insect Chironomus thummi thummi.</title>
        <authorList>
            <person name="Kao W.-Y."/>
            <person name="Bergtrom G."/>
        </authorList>
    </citation>
    <scope>NUCLEOTIDE SEQUENCE [GENOMIC DNA]</scope>
</reference>
<reference key="2">
    <citation type="journal article" date="1981" name="Hoppe-Seyler's Z. Physiol. Chem.">
        <title>Hemoglobins, XXXVIII. Amino acid sequence of a dimeric hemoglobin (erythrocruorin), component VI from Chironomus thummi thummi (CTT VI).</title>
        <authorList>
            <person name="Aschauer H."/>
            <person name="Zaidi Z.H."/>
            <person name="Braunitzer G."/>
        </authorList>
    </citation>
    <scope>PROTEIN SEQUENCE OF 16-162</scope>
</reference>
<reference key="3">
    <citation type="journal article" date="1991" name="Gene">
        <title>Differential regulation of insect globin and actin mRNAs during larval development in Chironomus thummi.</title>
        <authorList>
            <person name="Saffarini D.A."/>
            <person name="Trewitt P.M."/>
            <person name="Luhm R.A."/>
            <person name="Bergtrom G."/>
        </authorList>
    </citation>
    <scope>NUCLEOTIDE SEQUENCE [MRNA] OF 124-162</scope>
</reference>
<comment type="subunit">
    <text>Homodimer.</text>
</comment>
<comment type="miscellaneous">
    <text>There are at least 12 different components in Midge globin.</text>
</comment>
<comment type="similarity">
    <text evidence="1">Belongs to the globin family.</text>
</comment>
<proteinExistence type="evidence at protein level"/>
<accession>P02224</accession>
<sequence length="162" mass="17709">MKFLVLALCIAAASAAVLTTEQADLVKKTWSTVKFNEVDILYAVFKAYPDIMAKFPQFAGKDLDSIKDSAAFATHATRIVSFLSEVISLAGSDANIPAIQNLAKELATSHKPRGVSKDQFTEFRTALFTYLKAHINFDGPTETAWTLALDTTYAMLFSAMDS</sequence>
<organism>
    <name type="scientific">Chironomus thummi thummi</name>
    <name type="common">Midge</name>
    <dbReference type="NCBI Taxonomy" id="7155"/>
    <lineage>
        <taxon>Eukaryota</taxon>
        <taxon>Metazoa</taxon>
        <taxon>Ecdysozoa</taxon>
        <taxon>Arthropoda</taxon>
        <taxon>Hexapoda</taxon>
        <taxon>Insecta</taxon>
        <taxon>Pterygota</taxon>
        <taxon>Neoptera</taxon>
        <taxon>Endopterygota</taxon>
        <taxon>Diptera</taxon>
        <taxon>Nematocera</taxon>
        <taxon>Chironomoidea</taxon>
        <taxon>Chironomidae</taxon>
        <taxon>Chironominae</taxon>
        <taxon>Chironomus</taxon>
    </lineage>
</organism>
<protein>
    <recommendedName>
        <fullName>Globin CTT-VI</fullName>
    </recommendedName>
</protein>
<dbReference type="EMBL" id="U01340">
    <property type="protein sequence ID" value="AAA69813.1"/>
    <property type="molecule type" value="Genomic_DNA"/>
</dbReference>
<dbReference type="EMBL" id="U01341">
    <property type="protein sequence ID" value="AAA69814.1"/>
    <property type="molecule type" value="Genomic_DNA"/>
</dbReference>
<dbReference type="EMBL" id="M57411">
    <property type="protein sequence ID" value="AAA62728.1"/>
    <property type="molecule type" value="mRNA"/>
</dbReference>
<dbReference type="PIR" id="A02546">
    <property type="entry name" value="GGICE6"/>
</dbReference>
<dbReference type="SMR" id="P02224"/>
<dbReference type="Allergome" id="207">
    <property type="allergen name" value="Chi t 3"/>
</dbReference>
<dbReference type="Allergome" id="3194">
    <property type="allergen name" value="Chi t 3.0201"/>
</dbReference>
<dbReference type="GO" id="GO:0005576">
    <property type="term" value="C:extracellular region"/>
    <property type="evidence" value="ECO:0007669"/>
    <property type="project" value="InterPro"/>
</dbReference>
<dbReference type="GO" id="GO:0005833">
    <property type="term" value="C:hemoglobin complex"/>
    <property type="evidence" value="ECO:0007669"/>
    <property type="project" value="InterPro"/>
</dbReference>
<dbReference type="GO" id="GO:0020037">
    <property type="term" value="F:heme binding"/>
    <property type="evidence" value="ECO:0007669"/>
    <property type="project" value="InterPro"/>
</dbReference>
<dbReference type="GO" id="GO:0046872">
    <property type="term" value="F:metal ion binding"/>
    <property type="evidence" value="ECO:0007669"/>
    <property type="project" value="UniProtKB-KW"/>
</dbReference>
<dbReference type="GO" id="GO:0019825">
    <property type="term" value="F:oxygen binding"/>
    <property type="evidence" value="ECO:0007669"/>
    <property type="project" value="InterPro"/>
</dbReference>
<dbReference type="GO" id="GO:0005344">
    <property type="term" value="F:oxygen carrier activity"/>
    <property type="evidence" value="ECO:0007669"/>
    <property type="project" value="UniProtKB-KW"/>
</dbReference>
<dbReference type="CDD" id="cd01040">
    <property type="entry name" value="Mb-like"/>
    <property type="match status" value="1"/>
</dbReference>
<dbReference type="Gene3D" id="1.10.490.10">
    <property type="entry name" value="Globins"/>
    <property type="match status" value="1"/>
</dbReference>
<dbReference type="InterPro" id="IPR002336">
    <property type="entry name" value="Erythrocruorin"/>
</dbReference>
<dbReference type="InterPro" id="IPR000971">
    <property type="entry name" value="Globin"/>
</dbReference>
<dbReference type="InterPro" id="IPR009050">
    <property type="entry name" value="Globin-like_sf"/>
</dbReference>
<dbReference type="InterPro" id="IPR012292">
    <property type="entry name" value="Globin/Proto"/>
</dbReference>
<dbReference type="InterPro" id="IPR044399">
    <property type="entry name" value="Mb-like_M"/>
</dbReference>
<dbReference type="PANTHER" id="PTHR47217">
    <property type="entry name" value="GLOBIN-LIKE PROTEIN"/>
    <property type="match status" value="1"/>
</dbReference>
<dbReference type="PANTHER" id="PTHR47217:SF1">
    <property type="entry name" value="GLOBIN-LIKE PROTEIN"/>
    <property type="match status" value="1"/>
</dbReference>
<dbReference type="Pfam" id="PF00042">
    <property type="entry name" value="Globin"/>
    <property type="match status" value="1"/>
</dbReference>
<dbReference type="PRINTS" id="PR00611">
    <property type="entry name" value="ERYTHCRUORIN"/>
</dbReference>
<dbReference type="SUPFAM" id="SSF46458">
    <property type="entry name" value="Globin-like"/>
    <property type="match status" value="1"/>
</dbReference>
<dbReference type="PROSITE" id="PS01033">
    <property type="entry name" value="GLOBIN"/>
    <property type="match status" value="1"/>
</dbReference>
<evidence type="ECO:0000255" key="1">
    <source>
        <dbReference type="PROSITE-ProRule" id="PRU00238"/>
    </source>
</evidence>
<evidence type="ECO:0000269" key="2">
    <source>
    </source>
</evidence>